<name>Y754_ACTP7</name>
<sequence>MTMSTNLCAIYKSPKREGMFLYVAKRDQFDSVPEALRQMFGKPQFVMLFNLNGEKQLKRSKNEEVLQAIQTQGFFLQMPPPPENLLKTFLEQNRGEA</sequence>
<reference key="1">
    <citation type="submission" date="2008-06" db="EMBL/GenBank/DDBJ databases">
        <title>Genome and proteome analysis of A. pleuropneumoniae serotype 7.</title>
        <authorList>
            <person name="Linke B."/>
            <person name="Buettner F."/>
            <person name="Martinez-Arias R."/>
            <person name="Goesmann A."/>
            <person name="Baltes N."/>
            <person name="Tegetmeyer H."/>
            <person name="Singh M."/>
            <person name="Gerlach G.F."/>
        </authorList>
    </citation>
    <scope>NUCLEOTIDE SEQUENCE [LARGE SCALE GENOMIC DNA]</scope>
    <source>
        <strain>AP76</strain>
    </source>
</reference>
<gene>
    <name type="ordered locus">APP7_0754</name>
</gene>
<proteinExistence type="inferred from homology"/>
<feature type="chain" id="PRO_0000375274" description="YcgL domain-containing protein APP7_0754">
    <location>
        <begin position="1"/>
        <end position="97"/>
    </location>
</feature>
<feature type="domain" description="YcgL" evidence="1">
    <location>
        <begin position="6"/>
        <end position="90"/>
    </location>
</feature>
<protein>
    <recommendedName>
        <fullName evidence="1">YcgL domain-containing protein APP7_0754</fullName>
    </recommendedName>
</protein>
<organism>
    <name type="scientific">Actinobacillus pleuropneumoniae serotype 7 (strain AP76)</name>
    <dbReference type="NCBI Taxonomy" id="537457"/>
    <lineage>
        <taxon>Bacteria</taxon>
        <taxon>Pseudomonadati</taxon>
        <taxon>Pseudomonadota</taxon>
        <taxon>Gammaproteobacteria</taxon>
        <taxon>Pasteurellales</taxon>
        <taxon>Pasteurellaceae</taxon>
        <taxon>Actinobacillus</taxon>
    </lineage>
</organism>
<accession>B3GXE7</accession>
<evidence type="ECO:0000255" key="1">
    <source>
        <dbReference type="HAMAP-Rule" id="MF_01866"/>
    </source>
</evidence>
<dbReference type="EMBL" id="CP001091">
    <property type="protein sequence ID" value="ACE61406.1"/>
    <property type="molecule type" value="Genomic_DNA"/>
</dbReference>
<dbReference type="SMR" id="B3GXE7"/>
<dbReference type="KEGG" id="apa:APP7_0754"/>
<dbReference type="HOGENOM" id="CLU_155118_1_0_6"/>
<dbReference type="Proteomes" id="UP000001226">
    <property type="component" value="Chromosome"/>
</dbReference>
<dbReference type="Gene3D" id="3.10.510.20">
    <property type="entry name" value="YcgL domain"/>
    <property type="match status" value="1"/>
</dbReference>
<dbReference type="HAMAP" id="MF_01866">
    <property type="entry name" value="UPF0745"/>
    <property type="match status" value="1"/>
</dbReference>
<dbReference type="InterPro" id="IPR038068">
    <property type="entry name" value="YcgL-like_sf"/>
</dbReference>
<dbReference type="InterPro" id="IPR027354">
    <property type="entry name" value="YcgL_dom"/>
</dbReference>
<dbReference type="PANTHER" id="PTHR38109">
    <property type="entry name" value="PROTEIN YCGL"/>
    <property type="match status" value="1"/>
</dbReference>
<dbReference type="PANTHER" id="PTHR38109:SF1">
    <property type="entry name" value="PROTEIN YCGL"/>
    <property type="match status" value="1"/>
</dbReference>
<dbReference type="Pfam" id="PF05166">
    <property type="entry name" value="YcgL"/>
    <property type="match status" value="1"/>
</dbReference>
<dbReference type="SUPFAM" id="SSF160191">
    <property type="entry name" value="YcgL-like"/>
    <property type="match status" value="1"/>
</dbReference>
<dbReference type="PROSITE" id="PS51648">
    <property type="entry name" value="YCGL"/>
    <property type="match status" value="1"/>
</dbReference>